<comment type="function">
    <text evidence="1">Specifically methylates the N7 position of a guanine in 16S rRNA.</text>
</comment>
<comment type="subcellular location">
    <subcellularLocation>
        <location evidence="1">Cytoplasm</location>
    </subcellularLocation>
</comment>
<comment type="similarity">
    <text evidence="1">Belongs to the methyltransferase superfamily. RNA methyltransferase RsmG family.</text>
</comment>
<proteinExistence type="inferred from homology"/>
<dbReference type="EC" id="2.1.1.-" evidence="1"/>
<dbReference type="EMBL" id="AE009948">
    <property type="protein sequence ID" value="AAN00493.1"/>
    <property type="molecule type" value="Genomic_DNA"/>
</dbReference>
<dbReference type="RefSeq" id="NP_688620.1">
    <property type="nucleotide sequence ID" value="NC_004116.1"/>
</dbReference>
<dbReference type="RefSeq" id="WP_000188793.1">
    <property type="nucleotide sequence ID" value="NC_004116.1"/>
</dbReference>
<dbReference type="SMR" id="Q8DY64"/>
<dbReference type="STRING" id="208435.SAG1629"/>
<dbReference type="KEGG" id="sag:SAG1629"/>
<dbReference type="PATRIC" id="fig|208435.3.peg.1640"/>
<dbReference type="HOGENOM" id="CLU_065341_0_2_9"/>
<dbReference type="OrthoDB" id="9808773at2"/>
<dbReference type="Proteomes" id="UP000000821">
    <property type="component" value="Chromosome"/>
</dbReference>
<dbReference type="GO" id="GO:0005829">
    <property type="term" value="C:cytosol"/>
    <property type="evidence" value="ECO:0007669"/>
    <property type="project" value="TreeGrafter"/>
</dbReference>
<dbReference type="GO" id="GO:0070043">
    <property type="term" value="F:rRNA (guanine-N7-)-methyltransferase activity"/>
    <property type="evidence" value="ECO:0007669"/>
    <property type="project" value="UniProtKB-UniRule"/>
</dbReference>
<dbReference type="CDD" id="cd02440">
    <property type="entry name" value="AdoMet_MTases"/>
    <property type="match status" value="1"/>
</dbReference>
<dbReference type="FunFam" id="3.40.50.150:FF:000041">
    <property type="entry name" value="Ribosomal RNA small subunit methyltransferase G"/>
    <property type="match status" value="1"/>
</dbReference>
<dbReference type="Gene3D" id="3.40.50.150">
    <property type="entry name" value="Vaccinia Virus protein VP39"/>
    <property type="match status" value="1"/>
</dbReference>
<dbReference type="HAMAP" id="MF_00074">
    <property type="entry name" value="16SrRNA_methyltr_G"/>
    <property type="match status" value="1"/>
</dbReference>
<dbReference type="InterPro" id="IPR003682">
    <property type="entry name" value="rRNA_ssu_MeTfrase_G"/>
</dbReference>
<dbReference type="InterPro" id="IPR029063">
    <property type="entry name" value="SAM-dependent_MTases_sf"/>
</dbReference>
<dbReference type="NCBIfam" id="TIGR00138">
    <property type="entry name" value="rsmG_gidB"/>
    <property type="match status" value="1"/>
</dbReference>
<dbReference type="PANTHER" id="PTHR31760">
    <property type="entry name" value="S-ADENOSYL-L-METHIONINE-DEPENDENT METHYLTRANSFERASES SUPERFAMILY PROTEIN"/>
    <property type="match status" value="1"/>
</dbReference>
<dbReference type="PANTHER" id="PTHR31760:SF0">
    <property type="entry name" value="S-ADENOSYL-L-METHIONINE-DEPENDENT METHYLTRANSFERASES SUPERFAMILY PROTEIN"/>
    <property type="match status" value="1"/>
</dbReference>
<dbReference type="Pfam" id="PF02527">
    <property type="entry name" value="GidB"/>
    <property type="match status" value="1"/>
</dbReference>
<dbReference type="PIRSF" id="PIRSF003078">
    <property type="entry name" value="GidB"/>
    <property type="match status" value="1"/>
</dbReference>
<dbReference type="SUPFAM" id="SSF53335">
    <property type="entry name" value="S-adenosyl-L-methionine-dependent methyltransferases"/>
    <property type="match status" value="1"/>
</dbReference>
<feature type="chain" id="PRO_0000184338" description="Ribosomal RNA small subunit methyltransferase G">
    <location>
        <begin position="1"/>
        <end position="237"/>
    </location>
</feature>
<feature type="region of interest" description="Disordered" evidence="2">
    <location>
        <begin position="216"/>
        <end position="237"/>
    </location>
</feature>
<feature type="binding site" evidence="1">
    <location>
        <position position="78"/>
    </location>
    <ligand>
        <name>S-adenosyl-L-methionine</name>
        <dbReference type="ChEBI" id="CHEBI:59789"/>
    </ligand>
</feature>
<feature type="binding site" evidence="1">
    <location>
        <position position="83"/>
    </location>
    <ligand>
        <name>S-adenosyl-L-methionine</name>
        <dbReference type="ChEBI" id="CHEBI:59789"/>
    </ligand>
</feature>
<feature type="binding site" evidence="1">
    <location>
        <begin position="129"/>
        <end position="130"/>
    </location>
    <ligand>
        <name>S-adenosyl-L-methionine</name>
        <dbReference type="ChEBI" id="CHEBI:59789"/>
    </ligand>
</feature>
<feature type="binding site" evidence="1">
    <location>
        <position position="148"/>
    </location>
    <ligand>
        <name>S-adenosyl-L-methionine</name>
        <dbReference type="ChEBI" id="CHEBI:59789"/>
    </ligand>
</feature>
<organism>
    <name type="scientific">Streptococcus agalactiae serotype V (strain ATCC BAA-611 / 2603 V/R)</name>
    <dbReference type="NCBI Taxonomy" id="208435"/>
    <lineage>
        <taxon>Bacteria</taxon>
        <taxon>Bacillati</taxon>
        <taxon>Bacillota</taxon>
        <taxon>Bacilli</taxon>
        <taxon>Lactobacillales</taxon>
        <taxon>Streptococcaceae</taxon>
        <taxon>Streptococcus</taxon>
    </lineage>
</organism>
<protein>
    <recommendedName>
        <fullName evidence="1">Ribosomal RNA small subunit methyltransferase G</fullName>
        <ecNumber evidence="1">2.1.1.-</ecNumber>
    </recommendedName>
    <alternativeName>
        <fullName evidence="1">16S rRNA 7-methylguanosine methyltransferase</fullName>
        <shortName evidence="1">16S rRNA m7G methyltransferase</shortName>
    </alternativeName>
</protein>
<accession>Q8DY64</accession>
<evidence type="ECO:0000255" key="1">
    <source>
        <dbReference type="HAMAP-Rule" id="MF_00074"/>
    </source>
</evidence>
<evidence type="ECO:0000256" key="2">
    <source>
        <dbReference type="SAM" id="MobiDB-lite"/>
    </source>
</evidence>
<sequence length="237" mass="26823">MTPQAFYQVLIEHGITLTDKQKKQFETYFRLLVEWNEKINLTAITDKEEVYLKHFYDSIAPILQGYIDNSPLSILDIGAGAGFPSIPMKILYPEIDITIIDSLNKRINFLNILANELELSGVHFFHGRAEDFGQDRVFRAKFDIVTARAVAKMQVLAELTIPFLKVNGRLIALKAAAAEEELISAEKALKTLFSQVTVNKNYKLPNGDDRNITIVSKKKETPNKYPRKAGTPNKKPL</sequence>
<reference key="1">
    <citation type="journal article" date="2002" name="Proc. Natl. Acad. Sci. U.S.A.">
        <title>Complete genome sequence and comparative genomic analysis of an emerging human pathogen, serotype V Streptococcus agalactiae.</title>
        <authorList>
            <person name="Tettelin H."/>
            <person name="Masignani V."/>
            <person name="Cieslewicz M.J."/>
            <person name="Eisen J.A."/>
            <person name="Peterson S.N."/>
            <person name="Wessels M.R."/>
            <person name="Paulsen I.T."/>
            <person name="Nelson K.E."/>
            <person name="Margarit I."/>
            <person name="Read T.D."/>
            <person name="Madoff L.C."/>
            <person name="Wolf A.M."/>
            <person name="Beanan M.J."/>
            <person name="Brinkac L.M."/>
            <person name="Daugherty S.C."/>
            <person name="DeBoy R.T."/>
            <person name="Durkin A.S."/>
            <person name="Kolonay J.F."/>
            <person name="Madupu R."/>
            <person name="Lewis M.R."/>
            <person name="Radune D."/>
            <person name="Fedorova N.B."/>
            <person name="Scanlan D."/>
            <person name="Khouri H.M."/>
            <person name="Mulligan S."/>
            <person name="Carty H.A."/>
            <person name="Cline R.T."/>
            <person name="Van Aken S.E."/>
            <person name="Gill J."/>
            <person name="Scarselli M."/>
            <person name="Mora M."/>
            <person name="Iacobini E.T."/>
            <person name="Brettoni C."/>
            <person name="Galli G."/>
            <person name="Mariani M."/>
            <person name="Vegni F."/>
            <person name="Maione D."/>
            <person name="Rinaudo D."/>
            <person name="Rappuoli R."/>
            <person name="Telford J.L."/>
            <person name="Kasper D.L."/>
            <person name="Grandi G."/>
            <person name="Fraser C.M."/>
        </authorList>
    </citation>
    <scope>NUCLEOTIDE SEQUENCE [LARGE SCALE GENOMIC DNA]</scope>
    <source>
        <strain>ATCC BAA-611 / 2603 V/R</strain>
    </source>
</reference>
<gene>
    <name evidence="1" type="primary">rsmG</name>
    <name type="ordered locus">SAG1629</name>
</gene>
<keyword id="KW-0963">Cytoplasm</keyword>
<keyword id="KW-0489">Methyltransferase</keyword>
<keyword id="KW-1185">Reference proteome</keyword>
<keyword id="KW-0698">rRNA processing</keyword>
<keyword id="KW-0949">S-adenosyl-L-methionine</keyword>
<keyword id="KW-0808">Transferase</keyword>
<name>RSMG_STRA5</name>